<proteinExistence type="inferred from homology"/>
<feature type="chain" id="PRO_1000079953" description="Chromosomal replication initiator protein DnaA">
    <location>
        <begin position="1"/>
        <end position="437"/>
    </location>
</feature>
<feature type="region of interest" description="Domain I, interacts with DnaA modulators" evidence="1">
    <location>
        <begin position="1"/>
        <end position="74"/>
    </location>
</feature>
<feature type="region of interest" description="Domain II" evidence="1">
    <location>
        <begin position="74"/>
        <end position="98"/>
    </location>
</feature>
<feature type="region of interest" description="Domain III, AAA+ region" evidence="1">
    <location>
        <begin position="99"/>
        <end position="315"/>
    </location>
</feature>
<feature type="region of interest" description="Domain IV, binds dsDNA" evidence="1">
    <location>
        <begin position="316"/>
        <end position="437"/>
    </location>
</feature>
<feature type="binding site" evidence="1">
    <location>
        <position position="142"/>
    </location>
    <ligand>
        <name>ATP</name>
        <dbReference type="ChEBI" id="CHEBI:30616"/>
    </ligand>
</feature>
<feature type="binding site" evidence="1">
    <location>
        <position position="144"/>
    </location>
    <ligand>
        <name>ATP</name>
        <dbReference type="ChEBI" id="CHEBI:30616"/>
    </ligand>
</feature>
<feature type="binding site" evidence="1">
    <location>
        <position position="145"/>
    </location>
    <ligand>
        <name>ATP</name>
        <dbReference type="ChEBI" id="CHEBI:30616"/>
    </ligand>
</feature>
<feature type="binding site" evidence="1">
    <location>
        <position position="146"/>
    </location>
    <ligand>
        <name>ATP</name>
        <dbReference type="ChEBI" id="CHEBI:30616"/>
    </ligand>
</feature>
<comment type="function">
    <text evidence="1">Plays an essential role in the initiation and regulation of chromosomal replication. ATP-DnaA binds to the origin of replication (oriC) to initiate formation of the DNA replication initiation complex once per cell cycle. Binds the DnaA box (a 9 base pair repeat at the origin) and separates the double-stranded (ds)DNA. Forms a right-handed helical filament on oriC DNA; dsDNA binds to the exterior of the filament while single-stranded (ss)DNA is stabiized in the filament's interior. The ATP-DnaA-oriC complex binds and stabilizes one strand of the AT-rich DNA unwinding element (DUE), permitting loading of DNA polymerase. After initiation quickly degrades to an ADP-DnaA complex that is not apt for DNA replication. Binds acidic phospholipids.</text>
</comment>
<comment type="subunit">
    <text evidence="1">Oligomerizes as a right-handed, spiral filament on DNA at oriC.</text>
</comment>
<comment type="subcellular location">
    <subcellularLocation>
        <location evidence="1">Cytoplasm</location>
    </subcellularLocation>
</comment>
<comment type="domain">
    <text evidence="1">Domain I is involved in oligomerization and binding regulators, domain II is flexibile and of varying length in different bacteria, domain III forms the AAA+ region, while domain IV binds dsDNA.</text>
</comment>
<comment type="similarity">
    <text evidence="1">Belongs to the DnaA family.</text>
</comment>
<gene>
    <name evidence="1" type="primary">dnaA</name>
    <name type="ordered locus">LBJ_0004</name>
</gene>
<keyword id="KW-0067">ATP-binding</keyword>
<keyword id="KW-0963">Cytoplasm</keyword>
<keyword id="KW-0235">DNA replication</keyword>
<keyword id="KW-0238">DNA-binding</keyword>
<keyword id="KW-0446">Lipid-binding</keyword>
<keyword id="KW-0547">Nucleotide-binding</keyword>
<reference key="1">
    <citation type="journal article" date="2006" name="Proc. Natl. Acad. Sci. U.S.A.">
        <title>Genome reduction in Leptospira borgpetersenii reflects limited transmission potential.</title>
        <authorList>
            <person name="Bulach D.M."/>
            <person name="Zuerner R.L."/>
            <person name="Wilson P."/>
            <person name="Seemann T."/>
            <person name="McGrath A."/>
            <person name="Cullen P.A."/>
            <person name="Davis J."/>
            <person name="Johnson M."/>
            <person name="Kuczek E."/>
            <person name="Alt D.P."/>
            <person name="Peterson-Burch B."/>
            <person name="Coppel R.L."/>
            <person name="Rood J.I."/>
            <person name="Davies J.K."/>
            <person name="Adler B."/>
        </authorList>
    </citation>
    <scope>NUCLEOTIDE SEQUENCE [LARGE SCALE GENOMIC DNA]</scope>
    <source>
        <strain>JB197</strain>
    </source>
</reference>
<organism>
    <name type="scientific">Leptospira borgpetersenii serovar Hardjo-bovis (strain JB197)</name>
    <dbReference type="NCBI Taxonomy" id="355277"/>
    <lineage>
        <taxon>Bacteria</taxon>
        <taxon>Pseudomonadati</taxon>
        <taxon>Spirochaetota</taxon>
        <taxon>Spirochaetia</taxon>
        <taxon>Leptospirales</taxon>
        <taxon>Leptospiraceae</taxon>
        <taxon>Leptospira</taxon>
    </lineage>
</organism>
<sequence>MNLAWNKILEEVSKKISPQYYERFIDTLKLETLNSEKCTIIAPSATIKTHVERKYQSIIENAILEACGDKIPVEILIETKATSPLQSFLEKSFDQKDFQFNPDYTFETFIVGDCNRLAYTAAKECVRKPAEINPLYLFGSVGVGKTHLLHAIGSELIKKDPWKTVCYIDISSFMNEFRFALQSRELIESFKIKYQSYNCLLVDDIQLLSTNAEKTQDEFFALFNFLFERKRQIVIASDRPSSELTIHERLKSRFVTGVQADIQYPNKEIRKGIVTSHSKIMDLGLSEDVLEFLADQIEEDTRLLLGALNDIYLYKKSYSLLFLNLDKVKEIVKNRLYRKKNVEFSHDRIIESVAKEFNLDAAEIMGKSRKKELIIPRHICFYLLHNVFNVNKSQVGRLFQTQHTTVIHGLRKTEELLSDNKEIRFLVERISSKYKLQ</sequence>
<accession>Q04WF7</accession>
<evidence type="ECO:0000255" key="1">
    <source>
        <dbReference type="HAMAP-Rule" id="MF_00377"/>
    </source>
</evidence>
<protein>
    <recommendedName>
        <fullName evidence="1">Chromosomal replication initiator protein DnaA</fullName>
    </recommendedName>
</protein>
<name>DNAA_LEPBJ</name>
<dbReference type="EMBL" id="CP000350">
    <property type="protein sequence ID" value="ABJ74763.1"/>
    <property type="molecule type" value="Genomic_DNA"/>
</dbReference>
<dbReference type="SMR" id="Q04WF7"/>
<dbReference type="KEGG" id="lbj:LBJ_0004"/>
<dbReference type="HOGENOM" id="CLU_026910_3_2_12"/>
<dbReference type="Proteomes" id="UP000000656">
    <property type="component" value="Chromosome 1"/>
</dbReference>
<dbReference type="GO" id="GO:0005737">
    <property type="term" value="C:cytoplasm"/>
    <property type="evidence" value="ECO:0007669"/>
    <property type="project" value="UniProtKB-SubCell"/>
</dbReference>
<dbReference type="GO" id="GO:0005886">
    <property type="term" value="C:plasma membrane"/>
    <property type="evidence" value="ECO:0007669"/>
    <property type="project" value="TreeGrafter"/>
</dbReference>
<dbReference type="GO" id="GO:0005524">
    <property type="term" value="F:ATP binding"/>
    <property type="evidence" value="ECO:0007669"/>
    <property type="project" value="UniProtKB-UniRule"/>
</dbReference>
<dbReference type="GO" id="GO:0016887">
    <property type="term" value="F:ATP hydrolysis activity"/>
    <property type="evidence" value="ECO:0007669"/>
    <property type="project" value="InterPro"/>
</dbReference>
<dbReference type="GO" id="GO:0003688">
    <property type="term" value="F:DNA replication origin binding"/>
    <property type="evidence" value="ECO:0007669"/>
    <property type="project" value="UniProtKB-UniRule"/>
</dbReference>
<dbReference type="GO" id="GO:0008289">
    <property type="term" value="F:lipid binding"/>
    <property type="evidence" value="ECO:0007669"/>
    <property type="project" value="UniProtKB-KW"/>
</dbReference>
<dbReference type="GO" id="GO:0006270">
    <property type="term" value="P:DNA replication initiation"/>
    <property type="evidence" value="ECO:0007669"/>
    <property type="project" value="UniProtKB-UniRule"/>
</dbReference>
<dbReference type="GO" id="GO:0006275">
    <property type="term" value="P:regulation of DNA replication"/>
    <property type="evidence" value="ECO:0007669"/>
    <property type="project" value="UniProtKB-UniRule"/>
</dbReference>
<dbReference type="CDD" id="cd00009">
    <property type="entry name" value="AAA"/>
    <property type="match status" value="1"/>
</dbReference>
<dbReference type="CDD" id="cd06571">
    <property type="entry name" value="Bac_DnaA_C"/>
    <property type="match status" value="1"/>
</dbReference>
<dbReference type="FunFam" id="3.40.50.300:FF:000668">
    <property type="entry name" value="Chromosomal replication initiator protein DnaA"/>
    <property type="match status" value="1"/>
</dbReference>
<dbReference type="Gene3D" id="1.10.1750.10">
    <property type="match status" value="1"/>
</dbReference>
<dbReference type="Gene3D" id="1.10.8.60">
    <property type="match status" value="1"/>
</dbReference>
<dbReference type="Gene3D" id="3.30.300.180">
    <property type="match status" value="1"/>
</dbReference>
<dbReference type="Gene3D" id="3.40.50.300">
    <property type="entry name" value="P-loop containing nucleotide triphosphate hydrolases"/>
    <property type="match status" value="1"/>
</dbReference>
<dbReference type="HAMAP" id="MF_00377">
    <property type="entry name" value="DnaA_bact"/>
    <property type="match status" value="1"/>
</dbReference>
<dbReference type="InterPro" id="IPR003593">
    <property type="entry name" value="AAA+_ATPase"/>
</dbReference>
<dbReference type="InterPro" id="IPR001957">
    <property type="entry name" value="Chromosome_initiator_DnaA"/>
</dbReference>
<dbReference type="InterPro" id="IPR020591">
    <property type="entry name" value="Chromosome_initiator_DnaA-like"/>
</dbReference>
<dbReference type="InterPro" id="IPR013159">
    <property type="entry name" value="DnaA_C"/>
</dbReference>
<dbReference type="InterPro" id="IPR013317">
    <property type="entry name" value="DnaA_dom"/>
</dbReference>
<dbReference type="InterPro" id="IPR024633">
    <property type="entry name" value="DnaA_N_dom"/>
</dbReference>
<dbReference type="InterPro" id="IPR038454">
    <property type="entry name" value="DnaA_N_sf"/>
</dbReference>
<dbReference type="InterPro" id="IPR027417">
    <property type="entry name" value="P-loop_NTPase"/>
</dbReference>
<dbReference type="InterPro" id="IPR010921">
    <property type="entry name" value="Trp_repressor/repl_initiator"/>
</dbReference>
<dbReference type="NCBIfam" id="TIGR00362">
    <property type="entry name" value="DnaA"/>
    <property type="match status" value="1"/>
</dbReference>
<dbReference type="PANTHER" id="PTHR30050">
    <property type="entry name" value="CHROMOSOMAL REPLICATION INITIATOR PROTEIN DNAA"/>
    <property type="match status" value="1"/>
</dbReference>
<dbReference type="PANTHER" id="PTHR30050:SF2">
    <property type="entry name" value="CHROMOSOMAL REPLICATION INITIATOR PROTEIN DNAA"/>
    <property type="match status" value="1"/>
</dbReference>
<dbReference type="Pfam" id="PF00308">
    <property type="entry name" value="Bac_DnaA"/>
    <property type="match status" value="1"/>
</dbReference>
<dbReference type="Pfam" id="PF08299">
    <property type="entry name" value="Bac_DnaA_C"/>
    <property type="match status" value="1"/>
</dbReference>
<dbReference type="Pfam" id="PF11638">
    <property type="entry name" value="DnaA_N"/>
    <property type="match status" value="1"/>
</dbReference>
<dbReference type="PRINTS" id="PR00051">
    <property type="entry name" value="DNAA"/>
</dbReference>
<dbReference type="SMART" id="SM00382">
    <property type="entry name" value="AAA"/>
    <property type="match status" value="1"/>
</dbReference>
<dbReference type="SMART" id="SM00760">
    <property type="entry name" value="Bac_DnaA_C"/>
    <property type="match status" value="1"/>
</dbReference>
<dbReference type="SUPFAM" id="SSF52540">
    <property type="entry name" value="P-loop containing nucleoside triphosphate hydrolases"/>
    <property type="match status" value="1"/>
</dbReference>
<dbReference type="SUPFAM" id="SSF48295">
    <property type="entry name" value="TrpR-like"/>
    <property type="match status" value="1"/>
</dbReference>